<evidence type="ECO:0000250" key="1"/>
<evidence type="ECO:0000305" key="2"/>
<sequence>MTRGYIDDSVNHALDSRLIGSSVFQSSDALLDQLLSLHYRAHYHINISTKTKFSALSALLSEVEKLPVLKDELHCAIADNIYGIVFCELDEKEKGLQYVSKKLGSVNGYDRFGRMLDLERLFYKGNVDLAEFSSESWTIPKYSDGLTWHYLQAIIKGLDLSHFKPKTPFQWMLLTLNGSATDSNLLSYSHSLLKKSRFPNADESNNFELEQFHMVLQEHLKINNLNVKKEWEQFIIDSMEKSFQSISVAKSAMLFYRKVDLKRSILNFTNLVNYSNKYYELNKRYPDLLDLVSSYQFILSTCKTPFEPFFMPANVSSDFLKLLERIHNKYSIPIIEKQKALEGSSDVLDLCLASSTASVLSSSWETLYETSASSLPALVDHSQIFYLSNSLQTSLNASVSLKFKFAYHLATLRQIDQCIAYLKKQILTLHPEHFASWHLLALCESCINEDLQVSFKIINSVIQSMCELFDEGRQFTIDEKWQFIHIKLTQLQLVRDMFALEDALEILPEVFELYQRLFSDASEPLGPQINQSNDYLLQKIWLFALELYLENDDIENVKAALDEFKNVTSKYVNLNHNLAQGFVLYTHGHSEKATAEFEKVLHYDSTSVEALIGLAKIVLPDEEANLDTDLKHNSKINQKELHRNSATSLETSSAVARLKFLFEELVDKSIEGYQTSAVWWYLSKIYEIYSDSTRQQEALWRCIKYEELQPVREFKFCNF</sequence>
<dbReference type="EMBL" id="CR382126">
    <property type="protein sequence ID" value="CAG98768.1"/>
    <property type="molecule type" value="Genomic_DNA"/>
</dbReference>
<dbReference type="RefSeq" id="XP_456060.1">
    <property type="nucleotide sequence ID" value="XM_456060.1"/>
</dbReference>
<dbReference type="SMR" id="Q6CJ29"/>
<dbReference type="FunCoup" id="Q6CJ29">
    <property type="interactions" value="288"/>
</dbReference>
<dbReference type="STRING" id="284590.Q6CJ29"/>
<dbReference type="PaxDb" id="284590-Q6CJ29"/>
<dbReference type="KEGG" id="kla:KLLA0_F21956g"/>
<dbReference type="eggNOG" id="ENOG502QV6B">
    <property type="taxonomic scope" value="Eukaryota"/>
</dbReference>
<dbReference type="HOGENOM" id="CLU_019616_0_0_1"/>
<dbReference type="InParanoid" id="Q6CJ29"/>
<dbReference type="OMA" id="VSFKIVC"/>
<dbReference type="Proteomes" id="UP000000598">
    <property type="component" value="Chromosome F"/>
</dbReference>
<dbReference type="GO" id="GO:0005886">
    <property type="term" value="C:plasma membrane"/>
    <property type="evidence" value="ECO:0007669"/>
    <property type="project" value="UniProtKB-SubCell"/>
</dbReference>
<dbReference type="GO" id="GO:0006897">
    <property type="term" value="P:endocytosis"/>
    <property type="evidence" value="ECO:0007669"/>
    <property type="project" value="UniProtKB-KW"/>
</dbReference>
<dbReference type="CDD" id="cd23270">
    <property type="entry name" value="YPP1"/>
    <property type="match status" value="1"/>
</dbReference>
<dbReference type="Gene3D" id="1.25.40.10">
    <property type="entry name" value="Tetratricopeptide repeat domain"/>
    <property type="match status" value="1"/>
</dbReference>
<dbReference type="InterPro" id="IPR051722">
    <property type="entry name" value="Endocytosis_PI4K-reg_protein"/>
</dbReference>
<dbReference type="InterPro" id="IPR011990">
    <property type="entry name" value="TPR-like_helical_dom_sf"/>
</dbReference>
<dbReference type="PANTHER" id="PTHR23083:SF464">
    <property type="entry name" value="TETRATRICOPEPTIDE REPEAT DOMAIN 7, ISOFORM A"/>
    <property type="match status" value="1"/>
</dbReference>
<dbReference type="PANTHER" id="PTHR23083">
    <property type="entry name" value="TETRATRICOPEPTIDE REPEAT PROTEIN, TPR"/>
    <property type="match status" value="1"/>
</dbReference>
<dbReference type="SUPFAM" id="SSF48452">
    <property type="entry name" value="TPR-like"/>
    <property type="match status" value="1"/>
</dbReference>
<comment type="function">
    <text evidence="1">Involved in endocytosis.</text>
</comment>
<comment type="subcellular location">
    <subcellularLocation>
        <location evidence="1">Cytoplasmic granule</location>
    </subcellularLocation>
    <subcellularLocation>
        <location evidence="1">Cell membrane</location>
        <topology evidence="1">Peripheral membrane protein</topology>
        <orientation evidence="1">Cytoplasmic side</orientation>
    </subcellularLocation>
</comment>
<comment type="similarity">
    <text evidence="2">Belongs to the YPP1 family.</text>
</comment>
<proteinExistence type="inferred from homology"/>
<keyword id="KW-1003">Cell membrane</keyword>
<keyword id="KW-0254">Endocytosis</keyword>
<keyword id="KW-0472">Membrane</keyword>
<keyword id="KW-1185">Reference proteome</keyword>
<protein>
    <recommendedName>
        <fullName>Cargo-transport protein YPP1</fullName>
    </recommendedName>
</protein>
<accession>Q6CJ29</accession>
<gene>
    <name type="primary">YPP1</name>
    <name type="ordered locus">KLLA0F21956g</name>
</gene>
<reference key="1">
    <citation type="journal article" date="2004" name="Nature">
        <title>Genome evolution in yeasts.</title>
        <authorList>
            <person name="Dujon B."/>
            <person name="Sherman D."/>
            <person name="Fischer G."/>
            <person name="Durrens P."/>
            <person name="Casaregola S."/>
            <person name="Lafontaine I."/>
            <person name="de Montigny J."/>
            <person name="Marck C."/>
            <person name="Neuveglise C."/>
            <person name="Talla E."/>
            <person name="Goffard N."/>
            <person name="Frangeul L."/>
            <person name="Aigle M."/>
            <person name="Anthouard V."/>
            <person name="Babour A."/>
            <person name="Barbe V."/>
            <person name="Barnay S."/>
            <person name="Blanchin S."/>
            <person name="Beckerich J.-M."/>
            <person name="Beyne E."/>
            <person name="Bleykasten C."/>
            <person name="Boisrame A."/>
            <person name="Boyer J."/>
            <person name="Cattolico L."/>
            <person name="Confanioleri F."/>
            <person name="de Daruvar A."/>
            <person name="Despons L."/>
            <person name="Fabre E."/>
            <person name="Fairhead C."/>
            <person name="Ferry-Dumazet H."/>
            <person name="Groppi A."/>
            <person name="Hantraye F."/>
            <person name="Hennequin C."/>
            <person name="Jauniaux N."/>
            <person name="Joyet P."/>
            <person name="Kachouri R."/>
            <person name="Kerrest A."/>
            <person name="Koszul R."/>
            <person name="Lemaire M."/>
            <person name="Lesur I."/>
            <person name="Ma L."/>
            <person name="Muller H."/>
            <person name="Nicaud J.-M."/>
            <person name="Nikolski M."/>
            <person name="Oztas S."/>
            <person name="Ozier-Kalogeropoulos O."/>
            <person name="Pellenz S."/>
            <person name="Potier S."/>
            <person name="Richard G.-F."/>
            <person name="Straub M.-L."/>
            <person name="Suleau A."/>
            <person name="Swennen D."/>
            <person name="Tekaia F."/>
            <person name="Wesolowski-Louvel M."/>
            <person name="Westhof E."/>
            <person name="Wirth B."/>
            <person name="Zeniou-Meyer M."/>
            <person name="Zivanovic Y."/>
            <person name="Bolotin-Fukuhara M."/>
            <person name="Thierry A."/>
            <person name="Bouchier C."/>
            <person name="Caudron B."/>
            <person name="Scarpelli C."/>
            <person name="Gaillardin C."/>
            <person name="Weissenbach J."/>
            <person name="Wincker P."/>
            <person name="Souciet J.-L."/>
        </authorList>
    </citation>
    <scope>NUCLEOTIDE SEQUENCE [LARGE SCALE GENOMIC DNA]</scope>
    <source>
        <strain>ATCC 8585 / CBS 2359 / DSM 70799 / NBRC 1267 / NRRL Y-1140 / WM37</strain>
    </source>
</reference>
<feature type="chain" id="PRO_0000308808" description="Cargo-transport protein YPP1">
    <location>
        <begin position="1"/>
        <end position="719"/>
    </location>
</feature>
<name>YPP1_KLULA</name>
<organism>
    <name type="scientific">Kluyveromyces lactis (strain ATCC 8585 / CBS 2359 / DSM 70799 / NBRC 1267 / NRRL Y-1140 / WM37)</name>
    <name type="common">Yeast</name>
    <name type="synonym">Candida sphaerica</name>
    <dbReference type="NCBI Taxonomy" id="284590"/>
    <lineage>
        <taxon>Eukaryota</taxon>
        <taxon>Fungi</taxon>
        <taxon>Dikarya</taxon>
        <taxon>Ascomycota</taxon>
        <taxon>Saccharomycotina</taxon>
        <taxon>Saccharomycetes</taxon>
        <taxon>Saccharomycetales</taxon>
        <taxon>Saccharomycetaceae</taxon>
        <taxon>Kluyveromyces</taxon>
    </lineage>
</organism>